<organism>
    <name type="scientific">Mus musculus</name>
    <name type="common">Mouse</name>
    <dbReference type="NCBI Taxonomy" id="10090"/>
    <lineage>
        <taxon>Eukaryota</taxon>
        <taxon>Metazoa</taxon>
        <taxon>Chordata</taxon>
        <taxon>Craniata</taxon>
        <taxon>Vertebrata</taxon>
        <taxon>Euteleostomi</taxon>
        <taxon>Mammalia</taxon>
        <taxon>Eutheria</taxon>
        <taxon>Euarchontoglires</taxon>
        <taxon>Glires</taxon>
        <taxon>Rodentia</taxon>
        <taxon>Myomorpha</taxon>
        <taxon>Muroidea</taxon>
        <taxon>Muridae</taxon>
        <taxon>Murinae</taxon>
        <taxon>Mus</taxon>
        <taxon>Mus</taxon>
    </lineage>
</organism>
<sequence length="580" mass="65623">MVMLLRARCFQRLAIPDPMRVLYKDYRTATPQNFSNYESMKQDFKIEIPEYFNFAKDVLDQWTNMEKAGKRLSNPAFWWIDGNGEELRWSFEELGLLSRKFANILTEACSLQRGDRVMVILPKIPEWWLANVACLRTGTVLIPGTTQLTQKDILYRLQSSKAKCIITDDTLAPAVDAVAAKCENLHSKLIVSQHSREGWGNLKEMMKYASDSHTCVDTKHDEMMAIYFTSGTTGPPKMIGHTHSSFGLGLSVNGRFWLDLIASDVMWNTSDTGWAKSAWSSVFSPWTQGACVFAHYLPRFESTSILQTLSKFPITVFCSAPTAYRMLVQNDMSSYKFNSLKHCVSAGEPINPEVMEQWRKKTGLDIYEGYGQTETVLICGNFKGMKIKPGSMGKPSPAFDVKILDENGATLPPGQEGDIALQVLPERPFGLFTHYVDNPSKTASTLRGSFYITGDRGYMDEDGYFWFVARSDDIILSSGYRIGPFEVESALIEHPSIAESAVVSSPDPIRGEVVKAFIVLNPDYKSHDQEQLKKEIQEHVKKTTAPYKYPRKVEFIEELPKTVSGKVKRNELRKKEWVTT</sequence>
<gene>
    <name type="primary">Acsm3</name>
    <name type="synonym">Sa</name>
    <name type="synonym">Sah</name>
</gene>
<reference key="1">
    <citation type="journal article" date="1998" name="Endocrinology">
        <title>Identification of androgen-regulated genes in mouse kidney by representational difference analysis and random arbitrarily primed polymerase chain reaction.</title>
        <authorList>
            <person name="Melia M.J."/>
            <person name="Bofill N."/>
            <person name="Hubank M."/>
            <person name="Meseguer A."/>
        </authorList>
    </citation>
    <scope>NUCLEOTIDE SEQUENCE [MRNA] (ISOFORM 1)</scope>
    <scope>TISSUE SPECIFICITY</scope>
    <scope>INDUCTION</scope>
    <source>
        <strain>C57BL/6J</strain>
    </source>
</reference>
<reference key="2">
    <citation type="journal article" date="1998" name="Kidney Int.">
        <title>Isolation of genes identified in mouse renal proximal tubule by comparing different gene expression profiles.</title>
        <authorList>
            <person name="Takenaka M."/>
            <person name="Imai E."/>
            <person name="Kaneko T."/>
            <person name="Ito T."/>
            <person name="Moriyama T."/>
            <person name="Yamauchi A."/>
            <person name="Hori M."/>
            <person name="Kawamoto S."/>
            <person name="Okubo K."/>
        </authorList>
    </citation>
    <scope>NUCLEOTIDE SEQUENCE [MRNA] (ISOFORM 1)</scope>
    <scope>TISSUE SPECIFICITY</scope>
    <source>
        <strain>C57BL/6J</strain>
        <tissue>Kidney</tissue>
    </source>
</reference>
<reference key="3">
    <citation type="journal article" date="2004" name="J. Endocrinol.">
        <title>Sex steroid regulation and identification of different transcription units of the SA gene in mouse kidney.</title>
        <authorList>
            <person name="Areste C."/>
            <person name="Melia M.J."/>
            <person name="Isern J."/>
            <person name="Tovar J.L."/>
            <person name="Meseguer A."/>
        </authorList>
    </citation>
    <scope>NUCLEOTIDE SEQUENCE [MRNA] (ISOFORM 1)</scope>
    <scope>SUBCELLULAR LOCATION</scope>
    <scope>INDUCTION</scope>
    <scope>TISSUE SPECIFICITY</scope>
    <source>
        <strain>129/SvJ</strain>
        <tissue>Kidney</tissue>
    </source>
</reference>
<reference key="4">
    <citation type="journal article" date="2005" name="Science">
        <title>The transcriptional landscape of the mammalian genome.</title>
        <authorList>
            <person name="Carninci P."/>
            <person name="Kasukawa T."/>
            <person name="Katayama S."/>
            <person name="Gough J."/>
            <person name="Frith M.C."/>
            <person name="Maeda N."/>
            <person name="Oyama R."/>
            <person name="Ravasi T."/>
            <person name="Lenhard B."/>
            <person name="Wells C."/>
            <person name="Kodzius R."/>
            <person name="Shimokawa K."/>
            <person name="Bajic V.B."/>
            <person name="Brenner S.E."/>
            <person name="Batalov S."/>
            <person name="Forrest A.R."/>
            <person name="Zavolan M."/>
            <person name="Davis M.J."/>
            <person name="Wilming L.G."/>
            <person name="Aidinis V."/>
            <person name="Allen J.E."/>
            <person name="Ambesi-Impiombato A."/>
            <person name="Apweiler R."/>
            <person name="Aturaliya R.N."/>
            <person name="Bailey T.L."/>
            <person name="Bansal M."/>
            <person name="Baxter L."/>
            <person name="Beisel K.W."/>
            <person name="Bersano T."/>
            <person name="Bono H."/>
            <person name="Chalk A.M."/>
            <person name="Chiu K.P."/>
            <person name="Choudhary V."/>
            <person name="Christoffels A."/>
            <person name="Clutterbuck D.R."/>
            <person name="Crowe M.L."/>
            <person name="Dalla E."/>
            <person name="Dalrymple B.P."/>
            <person name="de Bono B."/>
            <person name="Della Gatta G."/>
            <person name="di Bernardo D."/>
            <person name="Down T."/>
            <person name="Engstrom P."/>
            <person name="Fagiolini M."/>
            <person name="Faulkner G."/>
            <person name="Fletcher C.F."/>
            <person name="Fukushima T."/>
            <person name="Furuno M."/>
            <person name="Futaki S."/>
            <person name="Gariboldi M."/>
            <person name="Georgii-Hemming P."/>
            <person name="Gingeras T.R."/>
            <person name="Gojobori T."/>
            <person name="Green R.E."/>
            <person name="Gustincich S."/>
            <person name="Harbers M."/>
            <person name="Hayashi Y."/>
            <person name="Hensch T.K."/>
            <person name="Hirokawa N."/>
            <person name="Hill D."/>
            <person name="Huminiecki L."/>
            <person name="Iacono M."/>
            <person name="Ikeo K."/>
            <person name="Iwama A."/>
            <person name="Ishikawa T."/>
            <person name="Jakt M."/>
            <person name="Kanapin A."/>
            <person name="Katoh M."/>
            <person name="Kawasawa Y."/>
            <person name="Kelso J."/>
            <person name="Kitamura H."/>
            <person name="Kitano H."/>
            <person name="Kollias G."/>
            <person name="Krishnan S.P."/>
            <person name="Kruger A."/>
            <person name="Kummerfeld S.K."/>
            <person name="Kurochkin I.V."/>
            <person name="Lareau L.F."/>
            <person name="Lazarevic D."/>
            <person name="Lipovich L."/>
            <person name="Liu J."/>
            <person name="Liuni S."/>
            <person name="McWilliam S."/>
            <person name="Madan Babu M."/>
            <person name="Madera M."/>
            <person name="Marchionni L."/>
            <person name="Matsuda H."/>
            <person name="Matsuzawa S."/>
            <person name="Miki H."/>
            <person name="Mignone F."/>
            <person name="Miyake S."/>
            <person name="Morris K."/>
            <person name="Mottagui-Tabar S."/>
            <person name="Mulder N."/>
            <person name="Nakano N."/>
            <person name="Nakauchi H."/>
            <person name="Ng P."/>
            <person name="Nilsson R."/>
            <person name="Nishiguchi S."/>
            <person name="Nishikawa S."/>
            <person name="Nori F."/>
            <person name="Ohara O."/>
            <person name="Okazaki Y."/>
            <person name="Orlando V."/>
            <person name="Pang K.C."/>
            <person name="Pavan W.J."/>
            <person name="Pavesi G."/>
            <person name="Pesole G."/>
            <person name="Petrovsky N."/>
            <person name="Piazza S."/>
            <person name="Reed J."/>
            <person name="Reid J.F."/>
            <person name="Ring B.Z."/>
            <person name="Ringwald M."/>
            <person name="Rost B."/>
            <person name="Ruan Y."/>
            <person name="Salzberg S.L."/>
            <person name="Sandelin A."/>
            <person name="Schneider C."/>
            <person name="Schoenbach C."/>
            <person name="Sekiguchi K."/>
            <person name="Semple C.A."/>
            <person name="Seno S."/>
            <person name="Sessa L."/>
            <person name="Sheng Y."/>
            <person name="Shibata Y."/>
            <person name="Shimada H."/>
            <person name="Shimada K."/>
            <person name="Silva D."/>
            <person name="Sinclair B."/>
            <person name="Sperling S."/>
            <person name="Stupka E."/>
            <person name="Sugiura K."/>
            <person name="Sultana R."/>
            <person name="Takenaka Y."/>
            <person name="Taki K."/>
            <person name="Tammoja K."/>
            <person name="Tan S.L."/>
            <person name="Tang S."/>
            <person name="Taylor M.S."/>
            <person name="Tegner J."/>
            <person name="Teichmann S.A."/>
            <person name="Ueda H.R."/>
            <person name="van Nimwegen E."/>
            <person name="Verardo R."/>
            <person name="Wei C.L."/>
            <person name="Yagi K."/>
            <person name="Yamanishi H."/>
            <person name="Zabarovsky E."/>
            <person name="Zhu S."/>
            <person name="Zimmer A."/>
            <person name="Hide W."/>
            <person name="Bult C."/>
            <person name="Grimmond S.M."/>
            <person name="Teasdale R.D."/>
            <person name="Liu E.T."/>
            <person name="Brusic V."/>
            <person name="Quackenbush J."/>
            <person name="Wahlestedt C."/>
            <person name="Mattick J.S."/>
            <person name="Hume D.A."/>
            <person name="Kai C."/>
            <person name="Sasaki D."/>
            <person name="Tomaru Y."/>
            <person name="Fukuda S."/>
            <person name="Kanamori-Katayama M."/>
            <person name="Suzuki M."/>
            <person name="Aoki J."/>
            <person name="Arakawa T."/>
            <person name="Iida J."/>
            <person name="Imamura K."/>
            <person name="Itoh M."/>
            <person name="Kato T."/>
            <person name="Kawaji H."/>
            <person name="Kawagashira N."/>
            <person name="Kawashima T."/>
            <person name="Kojima M."/>
            <person name="Kondo S."/>
            <person name="Konno H."/>
            <person name="Nakano K."/>
            <person name="Ninomiya N."/>
            <person name="Nishio T."/>
            <person name="Okada M."/>
            <person name="Plessy C."/>
            <person name="Shibata K."/>
            <person name="Shiraki T."/>
            <person name="Suzuki S."/>
            <person name="Tagami M."/>
            <person name="Waki K."/>
            <person name="Watahiki A."/>
            <person name="Okamura-Oho Y."/>
            <person name="Suzuki H."/>
            <person name="Kawai J."/>
            <person name="Hayashizaki Y."/>
        </authorList>
    </citation>
    <scope>NUCLEOTIDE SEQUENCE [LARGE SCALE MRNA] (ISOFORMS 1 AND 2)</scope>
    <source>
        <strain>C57BL/6J</strain>
        <tissue>Aorta</tissue>
        <tissue>Kidney</tissue>
        <tissue>Vein</tissue>
    </source>
</reference>
<reference key="5">
    <citation type="journal article" date="2004" name="Genome Res.">
        <title>The status, quality, and expansion of the NIH full-length cDNA project: the Mammalian Gene Collection (MGC).</title>
        <authorList>
            <consortium name="The MGC Project Team"/>
        </authorList>
    </citation>
    <scope>NUCLEOTIDE SEQUENCE [LARGE SCALE MRNA] (ISOFORM 1)</scope>
    <source>
        <strain>FVB/N</strain>
        <tissue>Kidney</tissue>
    </source>
</reference>
<reference key="6">
    <citation type="journal article" date="2001" name="J. Biol. Chem.">
        <title>Molecular identification and characterization of two medium-chain acyl-CoA synthetases, MACS1 and the Sa gene product.</title>
        <authorList>
            <person name="Fujino T."/>
            <person name="Takei Y.A."/>
            <person name="Sone H."/>
            <person name="Ioka R.X."/>
            <person name="Kamataki A."/>
            <person name="Magoori K."/>
            <person name="Takahashi S."/>
            <person name="Sakai J."/>
            <person name="Yamamoto T.T."/>
        </authorList>
    </citation>
    <scope>FUNCTION</scope>
    <scope>CATALYTIC ACTIVITY</scope>
    <scope>BIOPHYSICOCHEMICAL PROPERTIES</scope>
    <scope>SUBCELLULAR LOCATION</scope>
    <scope>TISSUE SPECIFICITY</scope>
</reference>
<reference key="7">
    <citation type="journal article" date="2010" name="Cell">
        <title>A tissue-specific atlas of mouse protein phosphorylation and expression.</title>
        <authorList>
            <person name="Huttlin E.L."/>
            <person name="Jedrychowski M.P."/>
            <person name="Elias J.E."/>
            <person name="Goswami T."/>
            <person name="Rad R."/>
            <person name="Beausoleil S.A."/>
            <person name="Villen J."/>
            <person name="Haas W."/>
            <person name="Sowa M.E."/>
            <person name="Gygi S.P."/>
        </authorList>
    </citation>
    <scope>IDENTIFICATION BY MASS SPECTROMETRY [LARGE SCALE ANALYSIS]</scope>
    <source>
        <tissue>Brown adipose tissue</tissue>
        <tissue>Kidney</tissue>
        <tissue>Liver</tissue>
    </source>
</reference>
<reference key="8">
    <citation type="journal article" date="2013" name="Mol. Cell">
        <title>SIRT5-mediated lysine desuccinylation impacts diverse metabolic pathways.</title>
        <authorList>
            <person name="Park J."/>
            <person name="Chen Y."/>
            <person name="Tishkoff D.X."/>
            <person name="Peng C."/>
            <person name="Tan M."/>
            <person name="Dai L."/>
            <person name="Xie Z."/>
            <person name="Zhang Y."/>
            <person name="Zwaans B.M."/>
            <person name="Skinner M.E."/>
            <person name="Lombard D.B."/>
            <person name="Zhao Y."/>
        </authorList>
    </citation>
    <scope>SUCCINYLATION [LARGE SCALE ANALYSIS] AT LYS-67 AND LYS-100</scope>
    <scope>IDENTIFICATION BY MASS SPECTROMETRY [LARGE SCALE ANALYSIS]</scope>
    <source>
        <tissue>Liver</tissue>
    </source>
</reference>
<reference key="9">
    <citation type="journal article" date="2013" name="Proc. Natl. Acad. Sci. U.S.A.">
        <title>Label-free quantitative proteomics of the lysine acetylome in mitochondria identifies substrates of SIRT3 in metabolic pathways.</title>
        <authorList>
            <person name="Rardin M.J."/>
            <person name="Newman J.C."/>
            <person name="Held J.M."/>
            <person name="Cusack M.P."/>
            <person name="Sorensen D.J."/>
            <person name="Li B."/>
            <person name="Schilling B."/>
            <person name="Mooney S.D."/>
            <person name="Kahn C.R."/>
            <person name="Verdin E."/>
            <person name="Gibson B.W."/>
        </authorList>
    </citation>
    <scope>ACETYLATION [LARGE SCALE ANALYSIS] AT LYS-151</scope>
    <scope>IDENTIFICATION BY MASS SPECTROMETRY [LARGE SCALE ANALYSIS]</scope>
    <source>
        <tissue>Liver</tissue>
    </source>
</reference>
<dbReference type="EC" id="6.2.1.2" evidence="5"/>
<dbReference type="EC" id="6.2.1.17" evidence="5"/>
<dbReference type="EMBL" id="AY064696">
    <property type="protein sequence ID" value="AAL40880.1"/>
    <property type="status" value="ALT_INIT"/>
    <property type="molecule type" value="mRNA"/>
</dbReference>
<dbReference type="EMBL" id="AB022340">
    <property type="protein sequence ID" value="BAA37141.1"/>
    <property type="status" value="ALT_FRAME"/>
    <property type="molecule type" value="mRNA"/>
</dbReference>
<dbReference type="EMBL" id="AF068246">
    <property type="protein sequence ID" value="AAC79656.1"/>
    <property type="status" value="ALT_INIT"/>
    <property type="molecule type" value="mRNA"/>
</dbReference>
<dbReference type="EMBL" id="AK041060">
    <property type="protein sequence ID" value="BAC30805.1"/>
    <property type="molecule type" value="mRNA"/>
</dbReference>
<dbReference type="EMBL" id="AK143946">
    <property type="protein sequence ID" value="BAE25622.1"/>
    <property type="molecule type" value="mRNA"/>
</dbReference>
<dbReference type="EMBL" id="AK165516">
    <property type="protein sequence ID" value="BAE38232.1"/>
    <property type="status" value="ALT_INIT"/>
    <property type="molecule type" value="mRNA"/>
</dbReference>
<dbReference type="EMBL" id="BC015248">
    <property type="protein sequence ID" value="AAH15248.1"/>
    <property type="status" value="ALT_INIT"/>
    <property type="molecule type" value="mRNA"/>
</dbReference>
<dbReference type="CCDS" id="CCDS21786.1">
    <molecule id="Q3UNX5-1"/>
</dbReference>
<dbReference type="RefSeq" id="NP_058566.3">
    <molecule id="Q3UNX5-1"/>
    <property type="nucleotide sequence ID" value="NM_016870.3"/>
</dbReference>
<dbReference type="RefSeq" id="NP_997606.2">
    <molecule id="Q3UNX5-1"/>
    <property type="nucleotide sequence ID" value="NM_212441.3"/>
</dbReference>
<dbReference type="RefSeq" id="NP_997607.2">
    <molecule id="Q3UNX5-1"/>
    <property type="nucleotide sequence ID" value="NM_212442.3"/>
</dbReference>
<dbReference type="SMR" id="Q3UNX5"/>
<dbReference type="FunCoup" id="Q3UNX5">
    <property type="interactions" value="106"/>
</dbReference>
<dbReference type="STRING" id="10090.ENSMUSP00000102138"/>
<dbReference type="SwissLipids" id="SLP:000001206"/>
<dbReference type="iPTMnet" id="Q3UNX5"/>
<dbReference type="PhosphoSitePlus" id="Q3UNX5"/>
<dbReference type="SwissPalm" id="Q3UNX5"/>
<dbReference type="jPOST" id="Q3UNX5"/>
<dbReference type="PaxDb" id="10090-ENSMUSP00000068803"/>
<dbReference type="PeptideAtlas" id="Q3UNX5"/>
<dbReference type="ProteomicsDB" id="285713">
    <molecule id="Q3UNX5-1"/>
</dbReference>
<dbReference type="ProteomicsDB" id="285714">
    <molecule id="Q3UNX5-2"/>
</dbReference>
<dbReference type="Antibodypedia" id="25607">
    <property type="antibodies" value="154 antibodies from 25 providers"/>
</dbReference>
<dbReference type="DNASU" id="20216"/>
<dbReference type="Ensembl" id="ENSMUST00000063770.10">
    <molecule id="Q3UNX5-1"/>
    <property type="protein sequence ID" value="ENSMUSP00000068803.4"/>
    <property type="gene ID" value="ENSMUSG00000030935.16"/>
</dbReference>
<dbReference type="Ensembl" id="ENSMUST00000106526.2">
    <molecule id="Q3UNX5-1"/>
    <property type="protein sequence ID" value="ENSMUSP00000102136.2"/>
    <property type="gene ID" value="ENSMUSG00000030935.16"/>
</dbReference>
<dbReference type="Ensembl" id="ENSMUST00000106527.8">
    <molecule id="Q3UNX5-1"/>
    <property type="protein sequence ID" value="ENSMUSP00000102137.2"/>
    <property type="gene ID" value="ENSMUSG00000030935.16"/>
</dbReference>
<dbReference type="Ensembl" id="ENSMUST00000106528.8">
    <molecule id="Q3UNX5-1"/>
    <property type="protein sequence ID" value="ENSMUSP00000102138.2"/>
    <property type="gene ID" value="ENSMUSG00000030935.16"/>
</dbReference>
<dbReference type="Ensembl" id="ENSMUST00000106529.8">
    <molecule id="Q3UNX5-2"/>
    <property type="protein sequence ID" value="ENSMUSP00000102139.2"/>
    <property type="gene ID" value="ENSMUSG00000030935.16"/>
</dbReference>
<dbReference type="GeneID" id="20216"/>
<dbReference type="KEGG" id="mmu:20216"/>
<dbReference type="UCSC" id="uc009jlq.1">
    <molecule id="Q3UNX5-1"/>
    <property type="organism name" value="mouse"/>
</dbReference>
<dbReference type="AGR" id="MGI:99538"/>
<dbReference type="CTD" id="6296"/>
<dbReference type="MGI" id="MGI:99538">
    <property type="gene designation" value="Acsm3"/>
</dbReference>
<dbReference type="VEuPathDB" id="HostDB:ENSMUSG00000030935"/>
<dbReference type="eggNOG" id="KOG1175">
    <property type="taxonomic scope" value="Eukaryota"/>
</dbReference>
<dbReference type="GeneTree" id="ENSGT00940000157930"/>
<dbReference type="HOGENOM" id="CLU_000022_59_10_1"/>
<dbReference type="InParanoid" id="Q3UNX5"/>
<dbReference type="OMA" id="HAWSNLF"/>
<dbReference type="PhylomeDB" id="Q3UNX5"/>
<dbReference type="TreeFam" id="TF354287"/>
<dbReference type="BioGRID-ORCS" id="20216">
    <property type="hits" value="2 hits in 79 CRISPR screens"/>
</dbReference>
<dbReference type="ChiTaRS" id="Acsm3">
    <property type="organism name" value="mouse"/>
</dbReference>
<dbReference type="PRO" id="PR:Q3UNX5"/>
<dbReference type="Proteomes" id="UP000000589">
    <property type="component" value="Chromosome 7"/>
</dbReference>
<dbReference type="RNAct" id="Q3UNX5">
    <property type="molecule type" value="protein"/>
</dbReference>
<dbReference type="Bgee" id="ENSMUSG00000030935">
    <property type="expression patterns" value="Expressed in right kidney and 107 other cell types or tissues"/>
</dbReference>
<dbReference type="GO" id="GO:0005759">
    <property type="term" value="C:mitochondrial matrix"/>
    <property type="evidence" value="ECO:0000314"/>
    <property type="project" value="MGI"/>
</dbReference>
<dbReference type="GO" id="GO:0005739">
    <property type="term" value="C:mitochondrion"/>
    <property type="evidence" value="ECO:0007005"/>
    <property type="project" value="MGI"/>
</dbReference>
<dbReference type="GO" id="GO:0043759">
    <property type="term" value="F:2-methylbutanoate-CoA ligase activity"/>
    <property type="evidence" value="ECO:0007669"/>
    <property type="project" value="RHEA"/>
</dbReference>
<dbReference type="GO" id="GO:0005524">
    <property type="term" value="F:ATP binding"/>
    <property type="evidence" value="ECO:0007669"/>
    <property type="project" value="UniProtKB-KW"/>
</dbReference>
<dbReference type="GO" id="GO:0015645">
    <property type="term" value="F:fatty acid ligase activity"/>
    <property type="evidence" value="ECO:0000314"/>
    <property type="project" value="MGI"/>
</dbReference>
<dbReference type="GO" id="GO:0031956">
    <property type="term" value="F:medium-chain fatty acid-CoA ligase activity"/>
    <property type="evidence" value="ECO:0000314"/>
    <property type="project" value="UniProtKB"/>
</dbReference>
<dbReference type="GO" id="GO:0046872">
    <property type="term" value="F:metal ion binding"/>
    <property type="evidence" value="ECO:0007669"/>
    <property type="project" value="UniProtKB-KW"/>
</dbReference>
<dbReference type="GO" id="GO:0018729">
    <property type="term" value="F:propionate CoA-transferase activity"/>
    <property type="evidence" value="ECO:0000314"/>
    <property type="project" value="UniProtKB"/>
</dbReference>
<dbReference type="GO" id="GO:0050218">
    <property type="term" value="F:propionate-CoA ligase activity"/>
    <property type="evidence" value="ECO:0007669"/>
    <property type="project" value="UniProtKB-EC"/>
</dbReference>
<dbReference type="GO" id="GO:0006633">
    <property type="term" value="P:fatty acid biosynthetic process"/>
    <property type="evidence" value="ECO:0000314"/>
    <property type="project" value="MGI"/>
</dbReference>
<dbReference type="CDD" id="cd05928">
    <property type="entry name" value="MACS_euk"/>
    <property type="match status" value="1"/>
</dbReference>
<dbReference type="FunFam" id="3.40.50.12780:FF:000007">
    <property type="entry name" value="Acyl-coenzyme A synthetase ACSM2A, mitochondrial"/>
    <property type="match status" value="1"/>
</dbReference>
<dbReference type="FunFam" id="3.30.300.30:FF:000005">
    <property type="entry name" value="Acyl-coenzyme A synthetase ACSM5, mitochondrial"/>
    <property type="match status" value="1"/>
</dbReference>
<dbReference type="Gene3D" id="3.30.300.30">
    <property type="match status" value="1"/>
</dbReference>
<dbReference type="Gene3D" id="3.40.50.12780">
    <property type="entry name" value="N-terminal domain of ligase-like"/>
    <property type="match status" value="1"/>
</dbReference>
<dbReference type="InterPro" id="IPR025110">
    <property type="entry name" value="AMP-bd_C"/>
</dbReference>
<dbReference type="InterPro" id="IPR045851">
    <property type="entry name" value="AMP-bd_C_sf"/>
</dbReference>
<dbReference type="InterPro" id="IPR020845">
    <property type="entry name" value="AMP-binding_CS"/>
</dbReference>
<dbReference type="InterPro" id="IPR000873">
    <property type="entry name" value="AMP-dep_synth/lig_dom"/>
</dbReference>
<dbReference type="InterPro" id="IPR042099">
    <property type="entry name" value="ANL_N_sf"/>
</dbReference>
<dbReference type="InterPro" id="IPR051087">
    <property type="entry name" value="Mitochondrial_ACSM"/>
</dbReference>
<dbReference type="PANTHER" id="PTHR43605">
    <property type="entry name" value="ACYL-COENZYME A SYNTHETASE"/>
    <property type="match status" value="1"/>
</dbReference>
<dbReference type="PANTHER" id="PTHR43605:SF7">
    <property type="entry name" value="ACYL-COENZYME A SYNTHETASE ACSM3, MITOCHONDRIAL"/>
    <property type="match status" value="1"/>
</dbReference>
<dbReference type="Pfam" id="PF00501">
    <property type="entry name" value="AMP-binding"/>
    <property type="match status" value="1"/>
</dbReference>
<dbReference type="Pfam" id="PF13193">
    <property type="entry name" value="AMP-binding_C"/>
    <property type="match status" value="1"/>
</dbReference>
<dbReference type="SUPFAM" id="SSF56801">
    <property type="entry name" value="Acetyl-CoA synthetase-like"/>
    <property type="match status" value="1"/>
</dbReference>
<dbReference type="PROSITE" id="PS00455">
    <property type="entry name" value="AMP_BINDING"/>
    <property type="match status" value="1"/>
</dbReference>
<feature type="transit peptide" description="Mitochondrion" evidence="4">
    <location>
        <begin position="1"/>
        <end position="21"/>
    </location>
</feature>
<feature type="chain" id="PRO_0000306098" description="Acyl-coenzyme A synthetase ACSM3, mitochondrial">
    <location>
        <begin position="22"/>
        <end position="580"/>
    </location>
</feature>
<feature type="binding site" evidence="1">
    <location>
        <begin position="229"/>
        <end position="237"/>
    </location>
    <ligand>
        <name>ATP</name>
        <dbReference type="ChEBI" id="CHEBI:30616"/>
    </ligand>
</feature>
<feature type="binding site" evidence="1">
    <location>
        <begin position="368"/>
        <end position="373"/>
    </location>
    <ligand>
        <name>ATP</name>
        <dbReference type="ChEBI" id="CHEBI:30616"/>
    </ligand>
</feature>
<feature type="binding site" evidence="1">
    <location>
        <position position="455"/>
    </location>
    <ligand>
        <name>ATP</name>
        <dbReference type="ChEBI" id="CHEBI:30616"/>
    </ligand>
</feature>
<feature type="binding site" evidence="1">
    <location>
        <position position="470"/>
    </location>
    <ligand>
        <name>ATP</name>
        <dbReference type="ChEBI" id="CHEBI:30616"/>
    </ligand>
</feature>
<feature type="binding site" evidence="1">
    <location>
        <position position="566"/>
    </location>
    <ligand>
        <name>ATP</name>
        <dbReference type="ChEBI" id="CHEBI:30616"/>
    </ligand>
</feature>
<feature type="modified residue" description="N6-succinyllysine" evidence="13">
    <location>
        <position position="67"/>
    </location>
</feature>
<feature type="modified residue" description="N6-succinyllysine" evidence="13">
    <location>
        <position position="100"/>
    </location>
</feature>
<feature type="modified residue" description="N6-acetyllysine" evidence="12">
    <location>
        <position position="151"/>
    </location>
</feature>
<feature type="splice variant" id="VSP_028397" description="In isoform 2." evidence="9">
    <original>VTT</original>
    <variation>EQGLLHEQMTVDRLLGKSARHERHVPSVCMNCSGVAAVLRYAEAA</variation>
    <location>
        <begin position="578"/>
        <end position="580"/>
    </location>
</feature>
<feature type="sequence conflict" description="In Ref. 3; AAC79656." evidence="10" ref="3">
    <original>T</original>
    <variation>P</variation>
    <location>
        <position position="137"/>
    </location>
</feature>
<comment type="function">
    <text evidence="5">Catalyzes the activation of fatty acids by CoA to produce an acyl-CoA, the first step in fatty acid metabolism (PubMed:11470804). Capable of activating medium-chain fatty acids with a preference for isobutyrate among fatty acids with 2-6 carbon atoms (PubMed:11470804).</text>
</comment>
<comment type="catalytic activity">
    <reaction evidence="5">
        <text>a medium-chain fatty acid + ATP + CoA = a medium-chain fatty acyl-CoA + AMP + diphosphate</text>
        <dbReference type="Rhea" id="RHEA:48340"/>
        <dbReference type="ChEBI" id="CHEBI:30616"/>
        <dbReference type="ChEBI" id="CHEBI:33019"/>
        <dbReference type="ChEBI" id="CHEBI:57287"/>
        <dbReference type="ChEBI" id="CHEBI:59558"/>
        <dbReference type="ChEBI" id="CHEBI:90546"/>
        <dbReference type="ChEBI" id="CHEBI:456215"/>
        <dbReference type="EC" id="6.2.1.2"/>
    </reaction>
    <physiologicalReaction direction="left-to-right" evidence="11">
        <dbReference type="Rhea" id="RHEA:48341"/>
    </physiologicalReaction>
</comment>
<comment type="catalytic activity">
    <reaction evidence="5">
        <text>propanoate + ATP + CoA = propanoyl-CoA + AMP + diphosphate</text>
        <dbReference type="Rhea" id="RHEA:20373"/>
        <dbReference type="ChEBI" id="CHEBI:17272"/>
        <dbReference type="ChEBI" id="CHEBI:30616"/>
        <dbReference type="ChEBI" id="CHEBI:33019"/>
        <dbReference type="ChEBI" id="CHEBI:57287"/>
        <dbReference type="ChEBI" id="CHEBI:57392"/>
        <dbReference type="ChEBI" id="CHEBI:456215"/>
        <dbReference type="EC" id="6.2.1.17"/>
    </reaction>
    <physiologicalReaction direction="left-to-right" evidence="11">
        <dbReference type="Rhea" id="RHEA:20374"/>
    </physiologicalReaction>
</comment>
<comment type="catalytic activity">
    <reaction evidence="5">
        <text>butanoate + ATP + CoA = butanoyl-CoA + AMP + diphosphate</text>
        <dbReference type="Rhea" id="RHEA:46172"/>
        <dbReference type="ChEBI" id="CHEBI:17968"/>
        <dbReference type="ChEBI" id="CHEBI:30616"/>
        <dbReference type="ChEBI" id="CHEBI:33019"/>
        <dbReference type="ChEBI" id="CHEBI:57287"/>
        <dbReference type="ChEBI" id="CHEBI:57371"/>
        <dbReference type="ChEBI" id="CHEBI:456215"/>
    </reaction>
    <physiologicalReaction direction="left-to-right" evidence="11">
        <dbReference type="Rhea" id="RHEA:46173"/>
    </physiologicalReaction>
</comment>
<comment type="catalytic activity">
    <reaction evidence="5">
        <text>2-methylpropanoate + ATP + CoA = 2-methylpropanoyl-CoA + AMP + diphosphate</text>
        <dbReference type="Rhea" id="RHEA:46176"/>
        <dbReference type="ChEBI" id="CHEBI:30616"/>
        <dbReference type="ChEBI" id="CHEBI:33019"/>
        <dbReference type="ChEBI" id="CHEBI:48944"/>
        <dbReference type="ChEBI" id="CHEBI:57287"/>
        <dbReference type="ChEBI" id="CHEBI:57338"/>
        <dbReference type="ChEBI" id="CHEBI:456215"/>
    </reaction>
    <physiologicalReaction direction="left-to-right" evidence="11">
        <dbReference type="Rhea" id="RHEA:46177"/>
    </physiologicalReaction>
</comment>
<comment type="catalytic activity">
    <reaction evidence="5">
        <text>2-methylbutanoate + ATP + CoA = 2-methylbutanoyl-CoA + AMP + diphosphate</text>
        <dbReference type="Rhea" id="RHEA:46180"/>
        <dbReference type="ChEBI" id="CHEBI:30616"/>
        <dbReference type="ChEBI" id="CHEBI:33019"/>
        <dbReference type="ChEBI" id="CHEBI:48946"/>
        <dbReference type="ChEBI" id="CHEBI:57287"/>
        <dbReference type="ChEBI" id="CHEBI:57336"/>
        <dbReference type="ChEBI" id="CHEBI:456215"/>
    </reaction>
    <physiologicalReaction direction="left-to-right" evidence="11">
        <dbReference type="Rhea" id="RHEA:46181"/>
    </physiologicalReaction>
</comment>
<comment type="catalytic activity">
    <reaction evidence="3">
        <text>octanoate + ATP + CoA = octanoyl-CoA + AMP + diphosphate</text>
        <dbReference type="Rhea" id="RHEA:33631"/>
        <dbReference type="ChEBI" id="CHEBI:25646"/>
        <dbReference type="ChEBI" id="CHEBI:30616"/>
        <dbReference type="ChEBI" id="CHEBI:33019"/>
        <dbReference type="ChEBI" id="CHEBI:57287"/>
        <dbReference type="ChEBI" id="CHEBI:57386"/>
        <dbReference type="ChEBI" id="CHEBI:456215"/>
    </reaction>
    <physiologicalReaction direction="left-to-right" evidence="3">
        <dbReference type="Rhea" id="RHEA:33632"/>
    </physiologicalReaction>
</comment>
<comment type="cofactor">
    <cofactor evidence="2">
        <name>Mg(2+)</name>
        <dbReference type="ChEBI" id="CHEBI:18420"/>
    </cofactor>
    <cofactor evidence="2">
        <name>Mn(2+)</name>
        <dbReference type="ChEBI" id="CHEBI:29035"/>
    </cofactor>
</comment>
<comment type="biophysicochemical properties">
    <kinetics>
        <KM evidence="5">0.92 mM for butyrate</KM>
        <KM evidence="5">0.05 mM for isobutyrate</KM>
    </kinetics>
</comment>
<comment type="subcellular location">
    <subcellularLocation>
        <location evidence="6">Mitochondrion</location>
    </subcellularLocation>
    <subcellularLocation>
        <location evidence="5">Mitochondrion matrix</location>
    </subcellularLocation>
</comment>
<comment type="alternative products">
    <event type="alternative splicing"/>
    <isoform>
        <id>Q3UNX5-1</id>
        <name>1</name>
        <sequence type="displayed"/>
    </isoform>
    <isoform>
        <id>Q3UNX5-2</id>
        <name>2</name>
        <sequence type="described" ref="VSP_028397"/>
    </isoform>
</comment>
<comment type="tissue specificity">
    <text evidence="5 6 7 8">Detected in kidney (at protein level). Detected in kidney proximal tubules and in liver. Detected at low levels in testis, stomach, heart and lung.</text>
</comment>
<comment type="induction">
    <text evidence="6 7">Up-regulated in kidney by androgens. Down-regulated in kidney by estrogens. Levels in kidney are very low in female C57BL/6 mice and in castrated male C57BL/6, 129/SvJ and BALB/c mice. Constitutively expressed in liver.</text>
</comment>
<comment type="similarity">
    <text evidence="10">Belongs to the ATP-dependent AMP-binding enzyme family.</text>
</comment>
<comment type="caution">
    <text evidence="10">It is uncertain whether Met-1 or Met-3 is the initiator.</text>
</comment>
<comment type="sequence caution" evidence="10">
    <conflict type="erroneous initiation">
        <sequence resource="EMBL-CDS" id="AAC79656"/>
    </conflict>
</comment>
<comment type="sequence caution" evidence="10">
    <conflict type="erroneous initiation">
        <sequence resource="EMBL-CDS" id="AAH15248"/>
    </conflict>
</comment>
<comment type="sequence caution" evidence="10">
    <conflict type="erroneous initiation">
        <sequence resource="EMBL-CDS" id="AAL40880"/>
    </conflict>
</comment>
<comment type="sequence caution" evidence="10">
    <conflict type="frameshift">
        <sequence resource="EMBL-CDS" id="BAA37141"/>
    </conflict>
</comment>
<comment type="sequence caution" evidence="10">
    <conflict type="erroneous initiation">
        <sequence resource="EMBL-CDS" id="BAE38232"/>
    </conflict>
</comment>
<accession>Q3UNX5</accession>
<accession>Q8BRY2</accession>
<accession>Q91WI1</accession>
<accession>Q9Z2F3</accession>
<accession>Q9Z2X0</accession>
<evidence type="ECO:0000250" key="1"/>
<evidence type="ECO:0000250" key="2">
    <source>
        <dbReference type="UniProtKB" id="Q08AH1"/>
    </source>
</evidence>
<evidence type="ECO:0000250" key="3">
    <source>
        <dbReference type="UniProtKB" id="Q53FZ2"/>
    </source>
</evidence>
<evidence type="ECO:0000255" key="4"/>
<evidence type="ECO:0000269" key="5">
    <source>
    </source>
</evidence>
<evidence type="ECO:0000269" key="6">
    <source>
    </source>
</evidence>
<evidence type="ECO:0000269" key="7">
    <source>
    </source>
</evidence>
<evidence type="ECO:0000269" key="8">
    <source>
    </source>
</evidence>
<evidence type="ECO:0000303" key="9">
    <source>
    </source>
</evidence>
<evidence type="ECO:0000305" key="10"/>
<evidence type="ECO:0000305" key="11">
    <source>
    </source>
</evidence>
<evidence type="ECO:0007744" key="12">
    <source>
    </source>
</evidence>
<evidence type="ECO:0007744" key="13">
    <source>
    </source>
</evidence>
<proteinExistence type="evidence at protein level"/>
<keyword id="KW-0007">Acetylation</keyword>
<keyword id="KW-0025">Alternative splicing</keyword>
<keyword id="KW-0067">ATP-binding</keyword>
<keyword id="KW-0276">Fatty acid metabolism</keyword>
<keyword id="KW-0436">Ligase</keyword>
<keyword id="KW-0443">Lipid metabolism</keyword>
<keyword id="KW-0460">Magnesium</keyword>
<keyword id="KW-0479">Metal-binding</keyword>
<keyword id="KW-0496">Mitochondrion</keyword>
<keyword id="KW-0547">Nucleotide-binding</keyword>
<keyword id="KW-1185">Reference proteome</keyword>
<keyword id="KW-0809">Transit peptide</keyword>
<protein>
    <recommendedName>
        <fullName>Acyl-coenzyme A synthetase ACSM3, mitochondrial</fullName>
        <ecNumber evidence="5">6.2.1.2</ecNumber>
    </recommendedName>
    <alternativeName>
        <fullName>Acyl-CoA synthetase medium-chain family member 3</fullName>
    </alternativeName>
    <alternativeName>
        <fullName>Butyrate--CoA ligase 3</fullName>
    </alternativeName>
    <alternativeName>
        <fullName>Butyryl-coenzyme A synthetase 3</fullName>
    </alternativeName>
    <alternativeName>
        <fullName>Middle-chain acyl-CoA synthetase 3</fullName>
    </alternativeName>
    <alternativeName>
        <fullName>Propionate--CoA ligase</fullName>
        <ecNumber evidence="5">6.2.1.17</ecNumber>
    </alternativeName>
    <alternativeName>
        <fullName>Protein SA homolog</fullName>
    </alternativeName>
</protein>
<name>ACSM3_MOUSE</name>